<keyword id="KW-0311">Gluconate utilization</keyword>
<keyword id="KW-0521">NADP</keyword>
<keyword id="KW-0560">Oxidoreductase</keyword>
<keyword id="KW-0570">Pentose shunt</keyword>
<organism>
    <name type="scientific">Ceratitis capitata</name>
    <name type="common">Mediterranean fruit fly</name>
    <name type="synonym">Tephritis capitata</name>
    <dbReference type="NCBI Taxonomy" id="7213"/>
    <lineage>
        <taxon>Eukaryota</taxon>
        <taxon>Metazoa</taxon>
        <taxon>Ecdysozoa</taxon>
        <taxon>Arthropoda</taxon>
        <taxon>Hexapoda</taxon>
        <taxon>Insecta</taxon>
        <taxon>Pterygota</taxon>
        <taxon>Neoptera</taxon>
        <taxon>Endopterygota</taxon>
        <taxon>Diptera</taxon>
        <taxon>Brachycera</taxon>
        <taxon>Muscomorpha</taxon>
        <taxon>Tephritoidea</taxon>
        <taxon>Tephritidae</taxon>
        <taxon>Ceratitis</taxon>
        <taxon>Ceratitis</taxon>
    </lineage>
</organism>
<dbReference type="EC" id="1.1.1.44"/>
<dbReference type="EMBL" id="S67873">
    <property type="protein sequence ID" value="AAB29396.1"/>
    <property type="molecule type" value="mRNA"/>
</dbReference>
<dbReference type="RefSeq" id="NP_001266319.1">
    <property type="nucleotide sequence ID" value="NM_001279390.1"/>
</dbReference>
<dbReference type="SMR" id="P41570"/>
<dbReference type="EnsemblMetazoa" id="NM_001279390.1">
    <property type="protein sequence ID" value="NP_001266319.1"/>
    <property type="gene ID" value="LOC101451876"/>
</dbReference>
<dbReference type="GeneID" id="101451876"/>
<dbReference type="KEGG" id="ccat:101451876"/>
<dbReference type="OrthoDB" id="434986at2759"/>
<dbReference type="UniPathway" id="UPA00115">
    <property type="reaction ID" value="UER00410"/>
</dbReference>
<dbReference type="GO" id="GO:0050661">
    <property type="term" value="F:NADP binding"/>
    <property type="evidence" value="ECO:0007669"/>
    <property type="project" value="InterPro"/>
</dbReference>
<dbReference type="GO" id="GO:0004616">
    <property type="term" value="F:phosphogluconate dehydrogenase (decarboxylating) activity"/>
    <property type="evidence" value="ECO:0007669"/>
    <property type="project" value="UniProtKB-EC"/>
</dbReference>
<dbReference type="GO" id="GO:0019521">
    <property type="term" value="P:D-gluconate metabolic process"/>
    <property type="evidence" value="ECO:0007669"/>
    <property type="project" value="UniProtKB-KW"/>
</dbReference>
<dbReference type="GO" id="GO:0006098">
    <property type="term" value="P:pentose-phosphate shunt"/>
    <property type="evidence" value="ECO:0007669"/>
    <property type="project" value="UniProtKB-UniPathway"/>
</dbReference>
<dbReference type="FunFam" id="1.10.1040.10:FF:000002">
    <property type="entry name" value="6-phosphogluconate dehydrogenase, decarboxylating"/>
    <property type="match status" value="1"/>
</dbReference>
<dbReference type="FunFam" id="1.20.5.320:FF:000002">
    <property type="entry name" value="6-phosphogluconate dehydrogenase, decarboxylating"/>
    <property type="match status" value="1"/>
</dbReference>
<dbReference type="FunFam" id="3.40.50.720:FF:000007">
    <property type="entry name" value="6-phosphogluconate dehydrogenase, decarboxylating"/>
    <property type="match status" value="1"/>
</dbReference>
<dbReference type="Gene3D" id="1.20.5.320">
    <property type="entry name" value="6-Phosphogluconate Dehydrogenase, domain 3"/>
    <property type="match status" value="1"/>
</dbReference>
<dbReference type="Gene3D" id="1.10.1040.10">
    <property type="entry name" value="N-(1-d-carboxylethyl)-l-norvaline Dehydrogenase, domain 2"/>
    <property type="match status" value="1"/>
</dbReference>
<dbReference type="Gene3D" id="3.40.50.720">
    <property type="entry name" value="NAD(P)-binding Rossmann-like Domain"/>
    <property type="match status" value="1"/>
</dbReference>
<dbReference type="InterPro" id="IPR008927">
    <property type="entry name" value="6-PGluconate_DH-like_C_sf"/>
</dbReference>
<dbReference type="InterPro" id="IPR013328">
    <property type="entry name" value="6PGD_dom2"/>
</dbReference>
<dbReference type="InterPro" id="IPR006114">
    <property type="entry name" value="6PGDH_C"/>
</dbReference>
<dbReference type="InterPro" id="IPR006113">
    <property type="entry name" value="6PGDH_Gnd/GntZ"/>
</dbReference>
<dbReference type="InterPro" id="IPR006115">
    <property type="entry name" value="6PGDH_NADP-bd"/>
</dbReference>
<dbReference type="InterPro" id="IPR006184">
    <property type="entry name" value="6PGdom_BS"/>
</dbReference>
<dbReference type="InterPro" id="IPR036291">
    <property type="entry name" value="NAD(P)-bd_dom_sf"/>
</dbReference>
<dbReference type="InterPro" id="IPR006183">
    <property type="entry name" value="Pgluconate_DH"/>
</dbReference>
<dbReference type="NCBIfam" id="TIGR00873">
    <property type="entry name" value="gnd"/>
    <property type="match status" value="1"/>
</dbReference>
<dbReference type="NCBIfam" id="NF006765">
    <property type="entry name" value="PRK09287.1"/>
    <property type="match status" value="1"/>
</dbReference>
<dbReference type="PANTHER" id="PTHR11811">
    <property type="entry name" value="6-PHOSPHOGLUCONATE DEHYDROGENASE"/>
    <property type="match status" value="1"/>
</dbReference>
<dbReference type="Pfam" id="PF00393">
    <property type="entry name" value="6PGD"/>
    <property type="match status" value="1"/>
</dbReference>
<dbReference type="Pfam" id="PF03446">
    <property type="entry name" value="NAD_binding_2"/>
    <property type="match status" value="1"/>
</dbReference>
<dbReference type="PIRSF" id="PIRSF000109">
    <property type="entry name" value="6PGD"/>
    <property type="match status" value="1"/>
</dbReference>
<dbReference type="PRINTS" id="PR00076">
    <property type="entry name" value="6PGDHDRGNASE"/>
</dbReference>
<dbReference type="SMART" id="SM01350">
    <property type="entry name" value="6PGD"/>
    <property type="match status" value="1"/>
</dbReference>
<dbReference type="SUPFAM" id="SSF48179">
    <property type="entry name" value="6-phosphogluconate dehydrogenase C-terminal domain-like"/>
    <property type="match status" value="1"/>
</dbReference>
<dbReference type="SUPFAM" id="SSF51735">
    <property type="entry name" value="NAD(P)-binding Rossmann-fold domains"/>
    <property type="match status" value="1"/>
</dbReference>
<dbReference type="PROSITE" id="PS00461">
    <property type="entry name" value="6PGD"/>
    <property type="match status" value="1"/>
</dbReference>
<gene>
    <name type="primary">Pgd</name>
</gene>
<comment type="function">
    <text evidence="1">Catalyzes the oxidative decarboxylation of 6-phosphogluconate to ribulose 5-phosphate and CO(2), with concomitant reduction of NADP to NADPH.</text>
</comment>
<comment type="catalytic activity">
    <reaction>
        <text>6-phospho-D-gluconate + NADP(+) = D-ribulose 5-phosphate + CO2 + NADPH</text>
        <dbReference type="Rhea" id="RHEA:10116"/>
        <dbReference type="ChEBI" id="CHEBI:16526"/>
        <dbReference type="ChEBI" id="CHEBI:57783"/>
        <dbReference type="ChEBI" id="CHEBI:58121"/>
        <dbReference type="ChEBI" id="CHEBI:58349"/>
        <dbReference type="ChEBI" id="CHEBI:58759"/>
        <dbReference type="EC" id="1.1.1.44"/>
    </reaction>
</comment>
<comment type="pathway">
    <text>Carbohydrate degradation; pentose phosphate pathway; D-ribulose 5-phosphate from D-glucose 6-phosphate (oxidative stage): step 3/3.</text>
</comment>
<comment type="subunit">
    <text evidence="1">Homodimer.</text>
</comment>
<comment type="similarity">
    <text evidence="2">Belongs to the 6-phosphogluconate dehydrogenase family.</text>
</comment>
<reference key="1">
    <citation type="journal article" date="1993" name="Insect Mol. Biol.">
        <title>Isolation of cDNAs encoding 6-phosphogluconate dehydrogenase and glucose-6-phosphate dehydrogenase from the mediterranean fruit fly Ceratitis capitata: correlating genetic and physical maps of chromosome 5.</title>
        <authorList>
            <person name="Scott M.J."/>
            <person name="Kriticou D."/>
            <person name="Robinson A.S."/>
        </authorList>
    </citation>
    <scope>NUCLEOTIDE SEQUENCE [MRNA]</scope>
</reference>
<name>6PGD_CERCA</name>
<feature type="chain" id="PRO_0000090068" description="6-phosphogluconate dehydrogenase, decarboxylating">
    <location>
        <begin position="1"/>
        <end position="481"/>
    </location>
</feature>
<feature type="active site" description="Proton acceptor" evidence="1">
    <location>
        <position position="184"/>
    </location>
</feature>
<feature type="active site" description="Proton donor" evidence="1">
    <location>
        <position position="191"/>
    </location>
</feature>
<feature type="binding site" evidence="1">
    <location>
        <begin position="11"/>
        <end position="16"/>
    </location>
    <ligand>
        <name>NADP(+)</name>
        <dbReference type="ChEBI" id="CHEBI:58349"/>
    </ligand>
</feature>
<feature type="binding site" evidence="1">
    <location>
        <begin position="34"/>
        <end position="36"/>
    </location>
    <ligand>
        <name>NADP(+)</name>
        <dbReference type="ChEBI" id="CHEBI:58349"/>
    </ligand>
</feature>
<feature type="binding site" evidence="1">
    <location>
        <begin position="76"/>
        <end position="78"/>
    </location>
    <ligand>
        <name>NADP(+)</name>
        <dbReference type="ChEBI" id="CHEBI:58349"/>
    </ligand>
</feature>
<feature type="binding site" evidence="1">
    <location>
        <position position="104"/>
    </location>
    <ligand>
        <name>NADP(+)</name>
        <dbReference type="ChEBI" id="CHEBI:58349"/>
    </ligand>
</feature>
<feature type="binding site" description="in other chain" evidence="1">
    <location>
        <position position="104"/>
    </location>
    <ligand>
        <name>substrate</name>
        <note>ligand shared between dimeric partners</note>
    </ligand>
</feature>
<feature type="binding site" description="in other chain" evidence="1">
    <location>
        <begin position="130"/>
        <end position="132"/>
    </location>
    <ligand>
        <name>substrate</name>
        <note>ligand shared between dimeric partners</note>
    </ligand>
</feature>
<feature type="binding site" description="in other chain" evidence="1">
    <location>
        <begin position="187"/>
        <end position="188"/>
    </location>
    <ligand>
        <name>substrate</name>
        <note>ligand shared between dimeric partners</note>
    </ligand>
</feature>
<feature type="binding site" description="in other chain" evidence="1">
    <location>
        <position position="192"/>
    </location>
    <ligand>
        <name>substrate</name>
        <note>ligand shared between dimeric partners</note>
    </ligand>
</feature>
<feature type="binding site" description="in other chain" evidence="1">
    <location>
        <position position="259"/>
    </location>
    <ligand>
        <name>substrate</name>
        <note>ligand shared between dimeric partners</note>
    </ligand>
</feature>
<feature type="binding site" description="in other chain" evidence="1">
    <location>
        <position position="286"/>
    </location>
    <ligand>
        <name>substrate</name>
        <note>ligand shared between dimeric partners</note>
    </ligand>
</feature>
<feature type="binding site" evidence="1">
    <location>
        <position position="445"/>
    </location>
    <ligand>
        <name>substrate</name>
        <note>ligand shared between dimeric partners</note>
    </ligand>
</feature>
<feature type="binding site" evidence="1">
    <location>
        <position position="451"/>
    </location>
    <ligand>
        <name>substrate</name>
        <note>ligand shared between dimeric partners</note>
    </ligand>
</feature>
<evidence type="ECO:0000250" key="1"/>
<evidence type="ECO:0000305" key="2"/>
<proteinExistence type="evidence at transcript level"/>
<accession>P41570</accession>
<protein>
    <recommendedName>
        <fullName>6-phosphogluconate dehydrogenase, decarboxylating</fullName>
        <ecNumber>1.1.1.44</ecNumber>
    </recommendedName>
</protein>
<sequence>MSAKADIALIGLAVMGQNLVLNMNDKGFVVCAYNRTVEKVNQFLKNEAKGTNVIGATSLQDMVNKLKLPRKIMLLVKAGSAVDDFIQQLVPLLSPGDVIIDGGNSEYQDTARRCDELRAKKILYVGSGVSGGEEGARHGPSLMPGGHPEAWPLIQPIFQSICAKADKEPCCEWVGEGGAGHFVKMVHNGIEYGDMQLICEAYQIMKALGLSQAEMATEFEKWNSEELDSFLIEITRDILNYQDDRGYLLERIRDTAGQKGTGKWTAISALQYGVPVTLIGEAVFSRCLSALKDERVAASKQLKGPNVNAKVEDLPKFLNHIKHALYCSKIVSYAQGFMLMREAAKENNWNLNYGGIALMWRGGCIIRSVFLGNIKDAYTRNPQLSNLLLDDFFKKAIEVGQNSWRQVVANAFLWGIPVPALSTALSFYDGYRTEKLPANLLQAQRDYFGAHTYELLGAEGKFVHTNWTGTGGNVSASTYQA</sequence>